<proteinExistence type="inferred from homology"/>
<comment type="function">
    <text evidence="1">Involved in the biosynthesis of branched-chain amino acids (BCAA). Catalyzes an alkyl-migration followed by a ketol-acid reduction of (S)-2-acetolactate (S2AL) to yield (R)-2,3-dihydroxy-isovalerate. In the isomerase reaction, S2AL is rearranged via a Mg-dependent methyl migration to produce 3-hydroxy-3-methyl-2-ketobutyrate (HMKB). In the reductase reaction, this 2-ketoacid undergoes a metal-dependent reduction by NADPH to yield (R)-2,3-dihydroxy-isovalerate.</text>
</comment>
<comment type="catalytic activity">
    <reaction evidence="1">
        <text>(2R)-2,3-dihydroxy-3-methylbutanoate + NADP(+) = (2S)-2-acetolactate + NADPH + H(+)</text>
        <dbReference type="Rhea" id="RHEA:22068"/>
        <dbReference type="ChEBI" id="CHEBI:15378"/>
        <dbReference type="ChEBI" id="CHEBI:49072"/>
        <dbReference type="ChEBI" id="CHEBI:57783"/>
        <dbReference type="ChEBI" id="CHEBI:58349"/>
        <dbReference type="ChEBI" id="CHEBI:58476"/>
        <dbReference type="EC" id="1.1.1.86"/>
    </reaction>
</comment>
<comment type="catalytic activity">
    <reaction evidence="1">
        <text>(2R,3R)-2,3-dihydroxy-3-methylpentanoate + NADP(+) = (S)-2-ethyl-2-hydroxy-3-oxobutanoate + NADPH + H(+)</text>
        <dbReference type="Rhea" id="RHEA:13493"/>
        <dbReference type="ChEBI" id="CHEBI:15378"/>
        <dbReference type="ChEBI" id="CHEBI:49256"/>
        <dbReference type="ChEBI" id="CHEBI:49258"/>
        <dbReference type="ChEBI" id="CHEBI:57783"/>
        <dbReference type="ChEBI" id="CHEBI:58349"/>
        <dbReference type="EC" id="1.1.1.86"/>
    </reaction>
</comment>
<comment type="cofactor">
    <cofactor evidence="1">
        <name>Mg(2+)</name>
        <dbReference type="ChEBI" id="CHEBI:18420"/>
    </cofactor>
    <text evidence="1">Binds 2 magnesium ions per subunit.</text>
</comment>
<comment type="pathway">
    <text evidence="1">Amino-acid biosynthesis; L-isoleucine biosynthesis; L-isoleucine from 2-oxobutanoate: step 2/4.</text>
</comment>
<comment type="pathway">
    <text evidence="1">Amino-acid biosynthesis; L-valine biosynthesis; L-valine from pyruvate: step 2/4.</text>
</comment>
<comment type="similarity">
    <text evidence="1">Belongs to the ketol-acid reductoisomerase family.</text>
</comment>
<gene>
    <name evidence="1" type="primary">ilvC</name>
    <name type="ordered locus">Npun_F3618</name>
</gene>
<feature type="chain" id="PRO_1000124314" description="Ketol-acid reductoisomerase (NADP(+))">
    <location>
        <begin position="1"/>
        <end position="331"/>
    </location>
</feature>
<feature type="domain" description="KARI N-terminal Rossmann" evidence="2">
    <location>
        <begin position="2"/>
        <end position="182"/>
    </location>
</feature>
<feature type="domain" description="KARI C-terminal knotted" evidence="3">
    <location>
        <begin position="183"/>
        <end position="328"/>
    </location>
</feature>
<feature type="active site" evidence="1">
    <location>
        <position position="108"/>
    </location>
</feature>
<feature type="binding site" evidence="1">
    <location>
        <begin position="25"/>
        <end position="28"/>
    </location>
    <ligand>
        <name>NADP(+)</name>
        <dbReference type="ChEBI" id="CHEBI:58349"/>
    </ligand>
</feature>
<feature type="binding site" evidence="1">
    <location>
        <position position="51"/>
    </location>
    <ligand>
        <name>NADP(+)</name>
        <dbReference type="ChEBI" id="CHEBI:58349"/>
    </ligand>
</feature>
<feature type="binding site" evidence="1">
    <location>
        <position position="53"/>
    </location>
    <ligand>
        <name>NADP(+)</name>
        <dbReference type="ChEBI" id="CHEBI:58349"/>
    </ligand>
</feature>
<feature type="binding site" evidence="1">
    <location>
        <begin position="83"/>
        <end position="86"/>
    </location>
    <ligand>
        <name>NADP(+)</name>
        <dbReference type="ChEBI" id="CHEBI:58349"/>
    </ligand>
</feature>
<feature type="binding site" evidence="1">
    <location>
        <position position="134"/>
    </location>
    <ligand>
        <name>NADP(+)</name>
        <dbReference type="ChEBI" id="CHEBI:58349"/>
    </ligand>
</feature>
<feature type="binding site" evidence="1">
    <location>
        <position position="191"/>
    </location>
    <ligand>
        <name>Mg(2+)</name>
        <dbReference type="ChEBI" id="CHEBI:18420"/>
        <label>1</label>
    </ligand>
</feature>
<feature type="binding site" evidence="1">
    <location>
        <position position="191"/>
    </location>
    <ligand>
        <name>Mg(2+)</name>
        <dbReference type="ChEBI" id="CHEBI:18420"/>
        <label>2</label>
    </ligand>
</feature>
<feature type="binding site" evidence="1">
    <location>
        <position position="195"/>
    </location>
    <ligand>
        <name>Mg(2+)</name>
        <dbReference type="ChEBI" id="CHEBI:18420"/>
        <label>1</label>
    </ligand>
</feature>
<feature type="binding site" evidence="1">
    <location>
        <position position="227"/>
    </location>
    <ligand>
        <name>Mg(2+)</name>
        <dbReference type="ChEBI" id="CHEBI:18420"/>
        <label>2</label>
    </ligand>
</feature>
<feature type="binding site" evidence="1">
    <location>
        <position position="231"/>
    </location>
    <ligand>
        <name>Mg(2+)</name>
        <dbReference type="ChEBI" id="CHEBI:18420"/>
        <label>2</label>
    </ligand>
</feature>
<feature type="binding site" evidence="1">
    <location>
        <position position="252"/>
    </location>
    <ligand>
        <name>substrate</name>
    </ligand>
</feature>
<keyword id="KW-0028">Amino-acid biosynthesis</keyword>
<keyword id="KW-0100">Branched-chain amino acid biosynthesis</keyword>
<keyword id="KW-0460">Magnesium</keyword>
<keyword id="KW-0479">Metal-binding</keyword>
<keyword id="KW-0521">NADP</keyword>
<keyword id="KW-0560">Oxidoreductase</keyword>
<keyword id="KW-1185">Reference proteome</keyword>
<evidence type="ECO:0000255" key="1">
    <source>
        <dbReference type="HAMAP-Rule" id="MF_00435"/>
    </source>
</evidence>
<evidence type="ECO:0000255" key="2">
    <source>
        <dbReference type="PROSITE-ProRule" id="PRU01197"/>
    </source>
</evidence>
<evidence type="ECO:0000255" key="3">
    <source>
        <dbReference type="PROSITE-ProRule" id="PRU01198"/>
    </source>
</evidence>
<protein>
    <recommendedName>
        <fullName evidence="1">Ketol-acid reductoisomerase (NADP(+))</fullName>
        <shortName evidence="1">KARI</shortName>
        <ecNumber evidence="1">1.1.1.86</ecNumber>
    </recommendedName>
    <alternativeName>
        <fullName evidence="1">Acetohydroxy-acid isomeroreductase</fullName>
        <shortName evidence="1">AHIR</shortName>
    </alternativeName>
    <alternativeName>
        <fullName evidence="1">Alpha-keto-beta-hydroxylacyl reductoisomerase</fullName>
    </alternativeName>
    <alternativeName>
        <fullName evidence="1">Ketol-acid reductoisomerase type 1</fullName>
    </alternativeName>
    <alternativeName>
        <fullName evidence="1">Ketol-acid reductoisomerase type I</fullName>
    </alternativeName>
</protein>
<accession>B2J2U6</accession>
<sequence>MARMYYDEDANLDLLAGKTIAIIGYGSQGHAHALNLKDSGLNVIVGLYPGSKSVAKAEAAGLTVKSVADAANAADFIMILLPDEVQKTIYKNEIEPNLEEGNVLAFAHGFNIHFGQVVPPANVDVVMVAPKGPGHLVRRTYEGGEGVPALFAVYQDASGQARDRAMSYAKGIGGTRAGVLETTFREETETDLFGEQAVLCGGLSALIKAGFETLVEAGYQPELAYFECLHEVKLIVDLVVEGGLAKMRDSISNTAEYGDYTRGPRIVTQQTKAEMQKILSEIQSGQFAREFVLENQSGKPGFTAMRRKESEHKIEEVGKDLRAMFSWLKKA</sequence>
<name>ILVC_NOSP7</name>
<dbReference type="EC" id="1.1.1.86" evidence="1"/>
<dbReference type="EMBL" id="CP001037">
    <property type="protein sequence ID" value="ACC82013.1"/>
    <property type="molecule type" value="Genomic_DNA"/>
</dbReference>
<dbReference type="RefSeq" id="WP_012409985.1">
    <property type="nucleotide sequence ID" value="NC_010628.1"/>
</dbReference>
<dbReference type="SMR" id="B2J2U6"/>
<dbReference type="STRING" id="63737.Npun_F3618"/>
<dbReference type="EnsemblBacteria" id="ACC82013">
    <property type="protein sequence ID" value="ACC82013"/>
    <property type="gene ID" value="Npun_F3618"/>
</dbReference>
<dbReference type="KEGG" id="npu:Npun_F3618"/>
<dbReference type="eggNOG" id="COG0059">
    <property type="taxonomic scope" value="Bacteria"/>
</dbReference>
<dbReference type="HOGENOM" id="CLU_033821_0_1_3"/>
<dbReference type="OrthoDB" id="9804088at2"/>
<dbReference type="PhylomeDB" id="B2J2U6"/>
<dbReference type="UniPathway" id="UPA00047">
    <property type="reaction ID" value="UER00056"/>
</dbReference>
<dbReference type="UniPathway" id="UPA00049">
    <property type="reaction ID" value="UER00060"/>
</dbReference>
<dbReference type="Proteomes" id="UP000001191">
    <property type="component" value="Chromosome"/>
</dbReference>
<dbReference type="GO" id="GO:0005829">
    <property type="term" value="C:cytosol"/>
    <property type="evidence" value="ECO:0007669"/>
    <property type="project" value="TreeGrafter"/>
</dbReference>
<dbReference type="GO" id="GO:0004455">
    <property type="term" value="F:ketol-acid reductoisomerase activity"/>
    <property type="evidence" value="ECO:0007669"/>
    <property type="project" value="UniProtKB-UniRule"/>
</dbReference>
<dbReference type="GO" id="GO:0000287">
    <property type="term" value="F:magnesium ion binding"/>
    <property type="evidence" value="ECO:0007669"/>
    <property type="project" value="UniProtKB-UniRule"/>
</dbReference>
<dbReference type="GO" id="GO:0050661">
    <property type="term" value="F:NADP binding"/>
    <property type="evidence" value="ECO:0007669"/>
    <property type="project" value="InterPro"/>
</dbReference>
<dbReference type="GO" id="GO:0009097">
    <property type="term" value="P:isoleucine biosynthetic process"/>
    <property type="evidence" value="ECO:0007669"/>
    <property type="project" value="UniProtKB-UniRule"/>
</dbReference>
<dbReference type="GO" id="GO:0009099">
    <property type="term" value="P:L-valine biosynthetic process"/>
    <property type="evidence" value="ECO:0007669"/>
    <property type="project" value="UniProtKB-UniRule"/>
</dbReference>
<dbReference type="FunFam" id="3.40.50.720:FF:000023">
    <property type="entry name" value="Ketol-acid reductoisomerase (NADP(+))"/>
    <property type="match status" value="1"/>
</dbReference>
<dbReference type="Gene3D" id="6.10.240.10">
    <property type="match status" value="1"/>
</dbReference>
<dbReference type="Gene3D" id="3.40.50.720">
    <property type="entry name" value="NAD(P)-binding Rossmann-like Domain"/>
    <property type="match status" value="1"/>
</dbReference>
<dbReference type="HAMAP" id="MF_00435">
    <property type="entry name" value="IlvC"/>
    <property type="match status" value="1"/>
</dbReference>
<dbReference type="InterPro" id="IPR008927">
    <property type="entry name" value="6-PGluconate_DH-like_C_sf"/>
</dbReference>
<dbReference type="InterPro" id="IPR013023">
    <property type="entry name" value="KARI"/>
</dbReference>
<dbReference type="InterPro" id="IPR000506">
    <property type="entry name" value="KARI_C"/>
</dbReference>
<dbReference type="InterPro" id="IPR013116">
    <property type="entry name" value="KARI_N"/>
</dbReference>
<dbReference type="InterPro" id="IPR014359">
    <property type="entry name" value="KARI_prok"/>
</dbReference>
<dbReference type="InterPro" id="IPR036291">
    <property type="entry name" value="NAD(P)-bd_dom_sf"/>
</dbReference>
<dbReference type="NCBIfam" id="TIGR00465">
    <property type="entry name" value="ilvC"/>
    <property type="match status" value="1"/>
</dbReference>
<dbReference type="NCBIfam" id="NF004017">
    <property type="entry name" value="PRK05479.1"/>
    <property type="match status" value="1"/>
</dbReference>
<dbReference type="NCBIfam" id="NF009940">
    <property type="entry name" value="PRK13403.1"/>
    <property type="match status" value="1"/>
</dbReference>
<dbReference type="PANTHER" id="PTHR21371">
    <property type="entry name" value="KETOL-ACID REDUCTOISOMERASE, MITOCHONDRIAL"/>
    <property type="match status" value="1"/>
</dbReference>
<dbReference type="PANTHER" id="PTHR21371:SF1">
    <property type="entry name" value="KETOL-ACID REDUCTOISOMERASE, MITOCHONDRIAL"/>
    <property type="match status" value="1"/>
</dbReference>
<dbReference type="Pfam" id="PF01450">
    <property type="entry name" value="KARI_C"/>
    <property type="match status" value="1"/>
</dbReference>
<dbReference type="Pfam" id="PF07991">
    <property type="entry name" value="KARI_N"/>
    <property type="match status" value="1"/>
</dbReference>
<dbReference type="PIRSF" id="PIRSF000116">
    <property type="entry name" value="IlvC_gammaproteo"/>
    <property type="match status" value="1"/>
</dbReference>
<dbReference type="SUPFAM" id="SSF48179">
    <property type="entry name" value="6-phosphogluconate dehydrogenase C-terminal domain-like"/>
    <property type="match status" value="1"/>
</dbReference>
<dbReference type="SUPFAM" id="SSF51735">
    <property type="entry name" value="NAD(P)-binding Rossmann-fold domains"/>
    <property type="match status" value="1"/>
</dbReference>
<dbReference type="PROSITE" id="PS51851">
    <property type="entry name" value="KARI_C"/>
    <property type="match status" value="1"/>
</dbReference>
<dbReference type="PROSITE" id="PS51850">
    <property type="entry name" value="KARI_N"/>
    <property type="match status" value="1"/>
</dbReference>
<organism>
    <name type="scientific">Nostoc punctiforme (strain ATCC 29133 / PCC 73102)</name>
    <dbReference type="NCBI Taxonomy" id="63737"/>
    <lineage>
        <taxon>Bacteria</taxon>
        <taxon>Bacillati</taxon>
        <taxon>Cyanobacteriota</taxon>
        <taxon>Cyanophyceae</taxon>
        <taxon>Nostocales</taxon>
        <taxon>Nostocaceae</taxon>
        <taxon>Nostoc</taxon>
    </lineage>
</organism>
<reference key="1">
    <citation type="journal article" date="2013" name="Plant Physiol.">
        <title>A Nostoc punctiforme Sugar Transporter Necessary to Establish a Cyanobacterium-Plant Symbiosis.</title>
        <authorList>
            <person name="Ekman M."/>
            <person name="Picossi S."/>
            <person name="Campbell E.L."/>
            <person name="Meeks J.C."/>
            <person name="Flores E."/>
        </authorList>
    </citation>
    <scope>NUCLEOTIDE SEQUENCE [LARGE SCALE GENOMIC DNA]</scope>
    <source>
        <strain>ATCC 29133 / PCC 73102</strain>
    </source>
</reference>